<protein>
    <recommendedName>
        <fullName>Leucine-rich repeat transmembrane protein FLRT3</fullName>
    </recommendedName>
    <alternativeName>
        <fullName>Fibronectin-like domain-containing leucine-rich transmembrane protein 3</fullName>
    </alternativeName>
</protein>
<accession>Q9NZU0</accession>
<accession>D3DW20</accession>
<accession>Q542Z9</accession>
<accession>Q96K39</accession>
<accession>Q96K42</accession>
<accession>Q96KB1</accession>
<accession>Q9P259</accession>
<reference key="1">
    <citation type="journal article" date="1999" name="Genomics">
        <title>Identification of FLRT1, FLRT2, and FLRT3: a novel family of transmembrane leucine-rich repeat proteins.</title>
        <authorList>
            <person name="Lacy S.E."/>
            <person name="Bonnemann C.G."/>
            <person name="Buzney E.A."/>
            <person name="Kunkel L.M."/>
        </authorList>
    </citation>
    <scope>NUCLEOTIDE SEQUENCE [MRNA]</scope>
    <scope>TISSUE SPECIFICITY</scope>
</reference>
<reference key="2">
    <citation type="journal article" date="2000" name="DNA Res.">
        <title>Prediction of the coding sequences of unidentified human genes. XVII. The complete sequences of 100 new cDNA clones from brain which code for large proteins in vitro.</title>
        <authorList>
            <person name="Nagase T."/>
            <person name="Kikuno R."/>
            <person name="Ishikawa K."/>
            <person name="Hirosawa M."/>
            <person name="Ohara O."/>
        </authorList>
    </citation>
    <scope>NUCLEOTIDE SEQUENCE [LARGE SCALE MRNA]</scope>
    <source>
        <tissue>Brain</tissue>
    </source>
</reference>
<reference key="3">
    <citation type="journal article" date="2004" name="Nat. Genet.">
        <title>Complete sequencing and characterization of 21,243 full-length human cDNAs.</title>
        <authorList>
            <person name="Ota T."/>
            <person name="Suzuki Y."/>
            <person name="Nishikawa T."/>
            <person name="Otsuki T."/>
            <person name="Sugiyama T."/>
            <person name="Irie R."/>
            <person name="Wakamatsu A."/>
            <person name="Hayashi K."/>
            <person name="Sato H."/>
            <person name="Nagai K."/>
            <person name="Kimura K."/>
            <person name="Makita H."/>
            <person name="Sekine M."/>
            <person name="Obayashi M."/>
            <person name="Nishi T."/>
            <person name="Shibahara T."/>
            <person name="Tanaka T."/>
            <person name="Ishii S."/>
            <person name="Yamamoto J."/>
            <person name="Saito K."/>
            <person name="Kawai Y."/>
            <person name="Isono Y."/>
            <person name="Nakamura Y."/>
            <person name="Nagahari K."/>
            <person name="Murakami K."/>
            <person name="Yasuda T."/>
            <person name="Iwayanagi T."/>
            <person name="Wagatsuma M."/>
            <person name="Shiratori A."/>
            <person name="Sudo H."/>
            <person name="Hosoiri T."/>
            <person name="Kaku Y."/>
            <person name="Kodaira H."/>
            <person name="Kondo H."/>
            <person name="Sugawara M."/>
            <person name="Takahashi M."/>
            <person name="Kanda K."/>
            <person name="Yokoi T."/>
            <person name="Furuya T."/>
            <person name="Kikkawa E."/>
            <person name="Omura Y."/>
            <person name="Abe K."/>
            <person name="Kamihara K."/>
            <person name="Katsuta N."/>
            <person name="Sato K."/>
            <person name="Tanikawa M."/>
            <person name="Yamazaki M."/>
            <person name="Ninomiya K."/>
            <person name="Ishibashi T."/>
            <person name="Yamashita H."/>
            <person name="Murakawa K."/>
            <person name="Fujimori K."/>
            <person name="Tanai H."/>
            <person name="Kimata M."/>
            <person name="Watanabe M."/>
            <person name="Hiraoka S."/>
            <person name="Chiba Y."/>
            <person name="Ishida S."/>
            <person name="Ono Y."/>
            <person name="Takiguchi S."/>
            <person name="Watanabe S."/>
            <person name="Yosida M."/>
            <person name="Hotuta T."/>
            <person name="Kusano J."/>
            <person name="Kanehori K."/>
            <person name="Takahashi-Fujii A."/>
            <person name="Hara H."/>
            <person name="Tanase T.-O."/>
            <person name="Nomura Y."/>
            <person name="Togiya S."/>
            <person name="Komai F."/>
            <person name="Hara R."/>
            <person name="Takeuchi K."/>
            <person name="Arita M."/>
            <person name="Imose N."/>
            <person name="Musashino K."/>
            <person name="Yuuki H."/>
            <person name="Oshima A."/>
            <person name="Sasaki N."/>
            <person name="Aotsuka S."/>
            <person name="Yoshikawa Y."/>
            <person name="Matsunawa H."/>
            <person name="Ichihara T."/>
            <person name="Shiohata N."/>
            <person name="Sano S."/>
            <person name="Moriya S."/>
            <person name="Momiyama H."/>
            <person name="Satoh N."/>
            <person name="Takami S."/>
            <person name="Terashima Y."/>
            <person name="Suzuki O."/>
            <person name="Nakagawa S."/>
            <person name="Senoh A."/>
            <person name="Mizoguchi H."/>
            <person name="Goto Y."/>
            <person name="Shimizu F."/>
            <person name="Wakebe H."/>
            <person name="Hishigaki H."/>
            <person name="Watanabe T."/>
            <person name="Sugiyama A."/>
            <person name="Takemoto M."/>
            <person name="Kawakami B."/>
            <person name="Yamazaki M."/>
            <person name="Watanabe K."/>
            <person name="Kumagai A."/>
            <person name="Itakura S."/>
            <person name="Fukuzumi Y."/>
            <person name="Fujimori Y."/>
            <person name="Komiyama M."/>
            <person name="Tashiro H."/>
            <person name="Tanigami A."/>
            <person name="Fujiwara T."/>
            <person name="Ono T."/>
            <person name="Yamada K."/>
            <person name="Fujii Y."/>
            <person name="Ozaki K."/>
            <person name="Hirao M."/>
            <person name="Ohmori Y."/>
            <person name="Kawabata A."/>
            <person name="Hikiji T."/>
            <person name="Kobatake N."/>
            <person name="Inagaki H."/>
            <person name="Ikema Y."/>
            <person name="Okamoto S."/>
            <person name="Okitani R."/>
            <person name="Kawakami T."/>
            <person name="Noguchi S."/>
            <person name="Itoh T."/>
            <person name="Shigeta K."/>
            <person name="Senba T."/>
            <person name="Matsumura K."/>
            <person name="Nakajima Y."/>
            <person name="Mizuno T."/>
            <person name="Morinaga M."/>
            <person name="Sasaki M."/>
            <person name="Togashi T."/>
            <person name="Oyama M."/>
            <person name="Hata H."/>
            <person name="Watanabe M."/>
            <person name="Komatsu T."/>
            <person name="Mizushima-Sugano J."/>
            <person name="Satoh T."/>
            <person name="Shirai Y."/>
            <person name="Takahashi Y."/>
            <person name="Nakagawa K."/>
            <person name="Okumura K."/>
            <person name="Nagase T."/>
            <person name="Nomura N."/>
            <person name="Kikuchi H."/>
            <person name="Masuho Y."/>
            <person name="Yamashita R."/>
            <person name="Nakai K."/>
            <person name="Yada T."/>
            <person name="Nakamura Y."/>
            <person name="Ohara O."/>
            <person name="Isogai T."/>
            <person name="Sugano S."/>
        </authorList>
    </citation>
    <scope>NUCLEOTIDE SEQUENCE [LARGE SCALE MRNA]</scope>
    <scope>VARIANT GLN-400</scope>
    <source>
        <tissue>Embryo</tissue>
        <tissue>Teratocarcinoma</tissue>
    </source>
</reference>
<reference key="4">
    <citation type="journal article" date="2003" name="Genome Res.">
        <title>The secreted protein discovery initiative (SPDI), a large-scale effort to identify novel human secreted and transmembrane proteins: a bioinformatics assessment.</title>
        <authorList>
            <person name="Clark H.F."/>
            <person name="Gurney A.L."/>
            <person name="Abaya E."/>
            <person name="Baker K."/>
            <person name="Baldwin D.T."/>
            <person name="Brush J."/>
            <person name="Chen J."/>
            <person name="Chow B."/>
            <person name="Chui C."/>
            <person name="Crowley C."/>
            <person name="Currell B."/>
            <person name="Deuel B."/>
            <person name="Dowd P."/>
            <person name="Eaton D."/>
            <person name="Foster J.S."/>
            <person name="Grimaldi C."/>
            <person name="Gu Q."/>
            <person name="Hass P.E."/>
            <person name="Heldens S."/>
            <person name="Huang A."/>
            <person name="Kim H.S."/>
            <person name="Klimowski L."/>
            <person name="Jin Y."/>
            <person name="Johnson S."/>
            <person name="Lee J."/>
            <person name="Lewis L."/>
            <person name="Liao D."/>
            <person name="Mark M.R."/>
            <person name="Robbie E."/>
            <person name="Sanchez C."/>
            <person name="Schoenfeld J."/>
            <person name="Seshagiri S."/>
            <person name="Simmons L."/>
            <person name="Singh J."/>
            <person name="Smith V."/>
            <person name="Stinson J."/>
            <person name="Vagts A."/>
            <person name="Vandlen R.L."/>
            <person name="Watanabe C."/>
            <person name="Wieand D."/>
            <person name="Woods K."/>
            <person name="Xie M.-H."/>
            <person name="Yansura D.G."/>
            <person name="Yi S."/>
            <person name="Yu G."/>
            <person name="Yuan J."/>
            <person name="Zhang M."/>
            <person name="Zhang Z."/>
            <person name="Goddard A.D."/>
            <person name="Wood W.I."/>
            <person name="Godowski P.J."/>
            <person name="Gray A.M."/>
        </authorList>
    </citation>
    <scope>NUCLEOTIDE SEQUENCE [LARGE SCALE MRNA]</scope>
    <scope>VARIANT GLN-400</scope>
</reference>
<reference key="5">
    <citation type="journal article" date="2005" name="DNA Res.">
        <title>Signal sequence and keyword trap in silico for selection of full-length human cDNAs encoding secretion or membrane proteins from oligo-capped cDNA libraries.</title>
        <authorList>
            <person name="Otsuki T."/>
            <person name="Ota T."/>
            <person name="Nishikawa T."/>
            <person name="Hayashi K."/>
            <person name="Suzuki Y."/>
            <person name="Yamamoto J."/>
            <person name="Wakamatsu A."/>
            <person name="Kimura K."/>
            <person name="Sakamoto K."/>
            <person name="Hatano N."/>
            <person name="Kawai Y."/>
            <person name="Ishii S."/>
            <person name="Saito K."/>
            <person name="Kojima S."/>
            <person name="Sugiyama T."/>
            <person name="Ono T."/>
            <person name="Okano K."/>
            <person name="Yoshikawa Y."/>
            <person name="Aotsuka S."/>
            <person name="Sasaki N."/>
            <person name="Hattori A."/>
            <person name="Okumura K."/>
            <person name="Nagai K."/>
            <person name="Sugano S."/>
            <person name="Isogai T."/>
        </authorList>
    </citation>
    <scope>NUCLEOTIDE SEQUENCE [LARGE SCALE MRNA]</scope>
</reference>
<reference key="6">
    <citation type="journal article" date="2001" name="Nature">
        <title>The DNA sequence and comparative analysis of human chromosome 20.</title>
        <authorList>
            <person name="Deloukas P."/>
            <person name="Matthews L.H."/>
            <person name="Ashurst J.L."/>
            <person name="Burton J."/>
            <person name="Gilbert J.G.R."/>
            <person name="Jones M."/>
            <person name="Stavrides G."/>
            <person name="Almeida J.P."/>
            <person name="Babbage A.K."/>
            <person name="Bagguley C.L."/>
            <person name="Bailey J."/>
            <person name="Barlow K.F."/>
            <person name="Bates K.N."/>
            <person name="Beard L.M."/>
            <person name="Beare D.M."/>
            <person name="Beasley O.P."/>
            <person name="Bird C.P."/>
            <person name="Blakey S.E."/>
            <person name="Bridgeman A.M."/>
            <person name="Brown A.J."/>
            <person name="Buck D."/>
            <person name="Burrill W.D."/>
            <person name="Butler A.P."/>
            <person name="Carder C."/>
            <person name="Carter N.P."/>
            <person name="Chapman J.C."/>
            <person name="Clamp M."/>
            <person name="Clark G."/>
            <person name="Clark L.N."/>
            <person name="Clark S.Y."/>
            <person name="Clee C.M."/>
            <person name="Clegg S."/>
            <person name="Cobley V.E."/>
            <person name="Collier R.E."/>
            <person name="Connor R.E."/>
            <person name="Corby N.R."/>
            <person name="Coulson A."/>
            <person name="Coville G.J."/>
            <person name="Deadman R."/>
            <person name="Dhami P.D."/>
            <person name="Dunn M."/>
            <person name="Ellington A.G."/>
            <person name="Frankland J.A."/>
            <person name="Fraser A."/>
            <person name="French L."/>
            <person name="Garner P."/>
            <person name="Grafham D.V."/>
            <person name="Griffiths C."/>
            <person name="Griffiths M.N.D."/>
            <person name="Gwilliam R."/>
            <person name="Hall R.E."/>
            <person name="Hammond S."/>
            <person name="Harley J.L."/>
            <person name="Heath P.D."/>
            <person name="Ho S."/>
            <person name="Holden J.L."/>
            <person name="Howden P.J."/>
            <person name="Huckle E."/>
            <person name="Hunt A.R."/>
            <person name="Hunt S.E."/>
            <person name="Jekosch K."/>
            <person name="Johnson C.M."/>
            <person name="Johnson D."/>
            <person name="Kay M.P."/>
            <person name="Kimberley A.M."/>
            <person name="King A."/>
            <person name="Knights A."/>
            <person name="Laird G.K."/>
            <person name="Lawlor S."/>
            <person name="Lehvaeslaiho M.H."/>
            <person name="Leversha M.A."/>
            <person name="Lloyd C."/>
            <person name="Lloyd D.M."/>
            <person name="Lovell J.D."/>
            <person name="Marsh V.L."/>
            <person name="Martin S.L."/>
            <person name="McConnachie L.J."/>
            <person name="McLay K."/>
            <person name="McMurray A.A."/>
            <person name="Milne S.A."/>
            <person name="Mistry D."/>
            <person name="Moore M.J.F."/>
            <person name="Mullikin J.C."/>
            <person name="Nickerson T."/>
            <person name="Oliver K."/>
            <person name="Parker A."/>
            <person name="Patel R."/>
            <person name="Pearce T.A.V."/>
            <person name="Peck A.I."/>
            <person name="Phillimore B.J.C.T."/>
            <person name="Prathalingam S.R."/>
            <person name="Plumb R.W."/>
            <person name="Ramsay H."/>
            <person name="Rice C.M."/>
            <person name="Ross M.T."/>
            <person name="Scott C.E."/>
            <person name="Sehra H.K."/>
            <person name="Shownkeen R."/>
            <person name="Sims S."/>
            <person name="Skuce C.D."/>
            <person name="Smith M.L."/>
            <person name="Soderlund C."/>
            <person name="Steward C.A."/>
            <person name="Sulston J.E."/>
            <person name="Swann R.M."/>
            <person name="Sycamore N."/>
            <person name="Taylor R."/>
            <person name="Tee L."/>
            <person name="Thomas D.W."/>
            <person name="Thorpe A."/>
            <person name="Tracey A."/>
            <person name="Tromans A.C."/>
            <person name="Vaudin M."/>
            <person name="Wall M."/>
            <person name="Wallis J.M."/>
            <person name="Whitehead S.L."/>
            <person name="Whittaker P."/>
            <person name="Willey D.L."/>
            <person name="Williams L."/>
            <person name="Williams S.A."/>
            <person name="Wilming L."/>
            <person name="Wray P.W."/>
            <person name="Hubbard T."/>
            <person name="Durbin R.M."/>
            <person name="Bentley D.R."/>
            <person name="Beck S."/>
            <person name="Rogers J."/>
        </authorList>
    </citation>
    <scope>NUCLEOTIDE SEQUENCE [LARGE SCALE GENOMIC DNA]</scope>
</reference>
<reference key="7">
    <citation type="submission" date="2005-09" db="EMBL/GenBank/DDBJ databases">
        <authorList>
            <person name="Mural R.J."/>
            <person name="Istrail S."/>
            <person name="Sutton G.G."/>
            <person name="Florea L."/>
            <person name="Halpern A.L."/>
            <person name="Mobarry C.M."/>
            <person name="Lippert R."/>
            <person name="Walenz B."/>
            <person name="Shatkay H."/>
            <person name="Dew I."/>
            <person name="Miller J.R."/>
            <person name="Flanigan M.J."/>
            <person name="Edwards N.J."/>
            <person name="Bolanos R."/>
            <person name="Fasulo D."/>
            <person name="Halldorsson B.V."/>
            <person name="Hannenhalli S."/>
            <person name="Turner R."/>
            <person name="Yooseph S."/>
            <person name="Lu F."/>
            <person name="Nusskern D.R."/>
            <person name="Shue B.C."/>
            <person name="Zheng X.H."/>
            <person name="Zhong F."/>
            <person name="Delcher A.L."/>
            <person name="Huson D.H."/>
            <person name="Kravitz S.A."/>
            <person name="Mouchard L."/>
            <person name="Reinert K."/>
            <person name="Remington K.A."/>
            <person name="Clark A.G."/>
            <person name="Waterman M.S."/>
            <person name="Eichler E.E."/>
            <person name="Adams M.D."/>
            <person name="Hunkapiller M.W."/>
            <person name="Myers E.W."/>
            <person name="Venter J.C."/>
        </authorList>
    </citation>
    <scope>NUCLEOTIDE SEQUENCE [LARGE SCALE GENOMIC DNA]</scope>
    <scope>VARIANT GLN-400</scope>
</reference>
<reference key="8">
    <citation type="journal article" date="2004" name="Genome Res.">
        <title>The status, quality, and expansion of the NIH full-length cDNA project: the Mammalian Gene Collection (MGC).</title>
        <authorList>
            <consortium name="The MGC Project Team"/>
        </authorList>
    </citation>
    <scope>NUCLEOTIDE SEQUENCE [LARGE SCALE MRNA]</scope>
    <source>
        <tissue>Kidney</tissue>
    </source>
</reference>
<reference key="9">
    <citation type="journal article" date="2004" name="Biochem. Biophys. Res. Commun.">
        <title>FLRT3, a cell surface molecule containing LRR repeats and a FNIII domain, promotes neurite outgrowth.</title>
        <authorList>
            <person name="Tsuji L."/>
            <person name="Yamashita T."/>
            <person name="Kubo T."/>
            <person name="Madura T."/>
            <person name="Tanaka H."/>
            <person name="Hosokawa K."/>
            <person name="Tohyama M."/>
        </authorList>
    </citation>
    <scope>FUNCTION</scope>
    <scope>SUBCELLULAR LOCATION</scope>
    <scope>TOPOLOGY</scope>
</reference>
<reference key="10">
    <citation type="journal article" date="2014" name="J. Proteomics">
        <title>An enzyme assisted RP-RPLC approach for in-depth analysis of human liver phosphoproteome.</title>
        <authorList>
            <person name="Bian Y."/>
            <person name="Song C."/>
            <person name="Cheng K."/>
            <person name="Dong M."/>
            <person name="Wang F."/>
            <person name="Huang J."/>
            <person name="Sun D."/>
            <person name="Wang L."/>
            <person name="Ye M."/>
            <person name="Zou H."/>
        </authorList>
    </citation>
    <scope>IDENTIFICATION BY MASS SPECTROMETRY [LARGE SCALE ANALYSIS]</scope>
    <source>
        <tissue>Liver</tissue>
    </source>
</reference>
<reference key="11">
    <citation type="journal article" date="2015" name="Structure">
        <title>Structural basis of latrophilin-FLRT-UNC5 interaction in cell adhesion.</title>
        <authorList>
            <person name="Lu Y.C."/>
            <person name="Nazarko O.V."/>
            <person name="Sando R. III"/>
            <person name="Salzman G.S."/>
            <person name="Suedhof T.C."/>
            <person name="Arac D."/>
        </authorList>
    </citation>
    <scope>X-RAY CRYSTALLOGRAPHY (2.6 ANGSTROMS) OF 29-357 IN COMPLEX WITH ADGRL3</scope>
    <scope>SUBUNIT</scope>
    <scope>INTERACTION WITH ADGRL3; UNC5B AND UNC5D</scope>
    <scope>SUBCELLULAR LOCATION</scope>
    <scope>DISULFIDE BOND</scope>
    <scope>GLYCOSYLATION AT ASN-226</scope>
    <scope>MUTAGENESIS OF ASP-38; TYR-43; ASN-45; ARG-47; TYR-64; TYR-89; TYR-91; ARG-181 AND ASP-183</scope>
</reference>
<reference key="12">
    <citation type="journal article" date="2011" name="Nature">
        <title>Exome sequencing identifies frequent mutation of the SWI/SNF complex gene PBRM1 in renal carcinoma.</title>
        <authorList>
            <person name="Varela I."/>
            <person name="Tarpey P."/>
            <person name="Raine K."/>
            <person name="Huang D."/>
            <person name="Ong C.K."/>
            <person name="Stephens P."/>
            <person name="Davies H."/>
            <person name="Jones D."/>
            <person name="Lin M.L."/>
            <person name="Teague J."/>
            <person name="Bignell G."/>
            <person name="Butler A."/>
            <person name="Cho J."/>
            <person name="Dalgliesh G.L."/>
            <person name="Galappaththige D."/>
            <person name="Greenman C."/>
            <person name="Hardy C."/>
            <person name="Jia M."/>
            <person name="Latimer C."/>
            <person name="Lau K.W."/>
            <person name="Marshall J."/>
            <person name="McLaren S."/>
            <person name="Menzies A."/>
            <person name="Mudie L."/>
            <person name="Stebbings L."/>
            <person name="Largaespada D.A."/>
            <person name="Wessels L.F.A."/>
            <person name="Richard S."/>
            <person name="Kahnoski R.J."/>
            <person name="Anema J."/>
            <person name="Tuveson D.A."/>
            <person name="Perez-Mancera P.A."/>
            <person name="Mustonen V."/>
            <person name="Fischer A."/>
            <person name="Adams D.J."/>
            <person name="Rust A."/>
            <person name="Chan-On W."/>
            <person name="Subimerb C."/>
            <person name="Dykema K."/>
            <person name="Furge K."/>
            <person name="Campbell P.J."/>
            <person name="Teh B.T."/>
            <person name="Stratton M.R."/>
            <person name="Futreal P.A."/>
        </authorList>
    </citation>
    <scope>VARIANT VAL-452</scope>
</reference>
<reference key="13">
    <citation type="journal article" date="2013" name="Am. J. Hum. Genet.">
        <title>Mutations in FGF17, IL17RD, DUSP6, SPRY4, and FLRT3 are identified in individuals with congenital hypogonadotropic hypogonadism.</title>
        <authorList>
            <person name="Miraoui H."/>
            <person name="Dwyer A.A."/>
            <person name="Sykiotis G.P."/>
            <person name="Plummer L."/>
            <person name="Chung W."/>
            <person name="Feng B."/>
            <person name="Beenken A."/>
            <person name="Clarke J."/>
            <person name="Pers T.H."/>
            <person name="Dworzynski P."/>
            <person name="Keefe K."/>
            <person name="Niedziela M."/>
            <person name="Raivio T."/>
            <person name="Crowley W.F. Jr."/>
            <person name="Seminara S.B."/>
            <person name="Quinton R."/>
            <person name="Hughes V.A."/>
            <person name="Kumanov P."/>
            <person name="Young J."/>
            <person name="Yialamas M.A."/>
            <person name="Hall J.E."/>
            <person name="Van Vliet G."/>
            <person name="Chanoine J.P."/>
            <person name="Rubenstein J."/>
            <person name="Mohammadi M."/>
            <person name="Tsai P.S."/>
            <person name="Sidis Y."/>
            <person name="Lage K."/>
            <person name="Pitteloud N."/>
        </authorList>
    </citation>
    <scope>VARIANTS HH21 LYS-69; GLY-97; ILE-144 AND ARG-339</scope>
</reference>
<comment type="function">
    <text evidence="1 2 9 12">Functions in cell-cell adhesion, cell migration and axon guidance, exerting an attractive or repulsive role depending on its interaction partners. Plays a role in the spatial organization of brain neurons. Plays a role in vascular development in the retina (By similarity). Plays a role in cell-cell adhesion via its interaction with ADGRL3 and probably also other latrophilins that are expressed at the surface of adjacent cells (PubMed:26235030). Interaction with the intracellular domain of ROBO1 mediates axon attraction towards cells expressing NTN1. Mediates axon growth cone collapse and plays a repulsive role in neuron guidance via its interaction with UNC5B, and possibly also other UNC-5 family members (By similarity). Promotes neurite outgrowth (in vitro) (PubMed:14706654). Mediates cell-cell contacts that promote an increase both in neurite number and in neurite length. Plays a role in the regulation of the density of glutamaergic synapses. Plays a role in fibroblast growth factor-mediated signaling cascades. Required for normal morphogenesis during embryonic development, but not for normal embryonic patterning. Required for normal ventral closure, headfold fusion and definitive endoderm migration during embryonic development. Required for the formation of a normal basement membrane and the maintenance of a normal anterior visceral endoderm during embryonic development (By similarity).</text>
</comment>
<comment type="subunit">
    <text evidence="2 12">Monomer and homodimer. Self-associates (via leucine-rich repeats), giving rise to homooligomers (PubMed:26235030). Interacts with FGFR1. Interacts (via extracellular domain) with ADGRL1/LPHN1 and LPHN2 (via olfactomedin-like domain) (By similarity). Interacts (via extracellular domain) with ADGRL3 (via olfactomedin-like domain); the interaction is direct (PubMed:26235030). Interacts (via extracellular domain) with UNC5B and UNC5D (via extracellular domain); the interaction is direct (PubMed:26235030). Identified in complexes composed of FLRT3, ADGRL3 and UNC5B, respectively FLRT3, ADGRL3 and UNC5D (PubMed:26235030). May also interact (via extracellular domain) with UNC5A and UNC5C. Interacts (via cytoplasmic domain) with ROBO1 (By similarity).</text>
</comment>
<comment type="interaction">
    <interactant intactId="EBI-1057092">
        <id>Q9NZU0</id>
    </interactant>
    <interactant intactId="EBI-2689295">
        <id>Q9HAR2</id>
        <label>ADGRL3</label>
    </interactant>
    <organismsDiffer>false</organismsDiffer>
    <experiments>4</experiments>
</comment>
<comment type="interaction">
    <interactant intactId="EBI-1057092">
        <id>Q9NZU0</id>
    </interactant>
    <interactant intactId="EBI-302641">
        <id>P05067-4</id>
        <label>APP</label>
    </interactant>
    <organismsDiffer>false</organismsDiffer>
    <experiments>3</experiments>
</comment>
<comment type="subcellular location">
    <subcellularLocation>
        <location evidence="2">Cell membrane</location>
        <topology evidence="2">Single-pass membrane protein</topology>
    </subcellularLocation>
    <subcellularLocation>
        <location evidence="2">Presynaptic cell membrane</location>
        <topology evidence="2">Single-pass membrane protein</topology>
    </subcellularLocation>
    <subcellularLocation>
        <location evidence="2">Endoplasmic reticulum membrane</location>
    </subcellularLocation>
    <subcellularLocation>
        <location evidence="2">Cell junction</location>
        <location evidence="2">Focal adhesion</location>
    </subcellularLocation>
    <subcellularLocation>
        <location evidence="2">Secreted</location>
    </subcellularLocation>
    <subcellularLocation>
        <location evidence="2">Cell projection</location>
        <location evidence="2">Axon</location>
    </subcellularLocation>
    <subcellularLocation>
        <location evidence="2">Cell projection</location>
        <location evidence="2">Growth cone membrane</location>
    </subcellularLocation>
    <text evidence="1 2">Detected on dendritic punctae that colocalize in part with glutamaergic synapses, but not with GABAergic synapses. Proteolytic cleavage in the juxtamembrane region gives rise to a shedded ectodomain.</text>
</comment>
<comment type="tissue specificity">
    <text evidence="6">Expressed in kidney, brain, pancreas, skeletal muscle, lung, liver, placenta, and heart.</text>
</comment>
<comment type="PTM">
    <text evidence="2">N-glycosylated.</text>
</comment>
<comment type="PTM">
    <text evidence="2">Proteolytic cleavage in the juxtamembrane region gives rise to a soluble ectodomain. Cleavage is probably effected by a metalloprotease.</text>
</comment>
<comment type="disease" evidence="11">
    <disease id="DI-03772">
        <name>Hypogonadotropic hypogonadism 21 with or without anosmia</name>
        <acronym>HH21</acronym>
        <description>A disorder characterized by absent or incomplete sexual maturation by the age of 18 years, in conjunction with low levels of circulating gonadotropins and testosterone and no other abnormalities of the hypothalamic-pituitary axis. In some cases, it is associated with non-reproductive phenotypes, such as anosmia, cleft palate, and sensorineural hearing loss. Anosmia or hyposmia is related to the absence or hypoplasia of the olfactory bulbs and tracts. Hypogonadism is due to deficiency in gonadotropin-releasing hormone and probably results from a failure of embryonic migration of gonadotropin-releasing hormone-synthesizing neurons. In the presence of anosmia, idiopathic hypogonadotropic hypogonadism is referred to as Kallmann syndrome, whereas in the presence of a normal sense of smell, it has been termed normosmic idiopathic hypogonadotropic hypogonadism (nIHH).</description>
        <dbReference type="MIM" id="615271"/>
    </disease>
    <text evidence="11">The disease is caused by variants affecting distinct genetic loci, including the gene represented in this entry. Some patients carrying mutations in FLRT3 also have a mutation in another HH-associated gene including FGFR1, HS6ST1 and FGF17 (PubMed:23643382).</text>
</comment>
<comment type="sequence caution" evidence="14">
    <conflict type="erroneous initiation">
        <sequence resource="EMBL-CDS" id="BAA95993"/>
    </conflict>
    <text>Extended N-terminus.</text>
</comment>
<comment type="sequence caution" evidence="14">
    <conflict type="erroneous initiation">
        <sequence resource="EMBL-CDS" id="BAB55282"/>
    </conflict>
    <text>Truncated N-terminus.</text>
</comment>
<comment type="sequence caution" evidence="14">
    <conflict type="erroneous initiation">
        <sequence resource="EMBL-CDS" id="BAB55303"/>
    </conflict>
    <text>Truncated N-terminus.</text>
</comment>
<dbReference type="EMBL" id="AF169677">
    <property type="protein sequence ID" value="AAF28461.1"/>
    <property type="molecule type" value="mRNA"/>
</dbReference>
<dbReference type="EMBL" id="AB040902">
    <property type="protein sequence ID" value="BAA95993.1"/>
    <property type="status" value="ALT_INIT"/>
    <property type="molecule type" value="mRNA"/>
</dbReference>
<dbReference type="EMBL" id="AK027297">
    <property type="protein sequence ID" value="BAB55023.1"/>
    <property type="molecule type" value="mRNA"/>
</dbReference>
<dbReference type="EMBL" id="AK027670">
    <property type="protein sequence ID" value="BAB55282.1"/>
    <property type="status" value="ALT_INIT"/>
    <property type="molecule type" value="mRNA"/>
</dbReference>
<dbReference type="EMBL" id="AK027694">
    <property type="protein sequence ID" value="BAB55303.1"/>
    <property type="status" value="ALT_INIT"/>
    <property type="molecule type" value="mRNA"/>
</dbReference>
<dbReference type="EMBL" id="AY358319">
    <property type="protein sequence ID" value="AAQ88685.1"/>
    <property type="molecule type" value="mRNA"/>
</dbReference>
<dbReference type="EMBL" id="AK074909">
    <property type="protein sequence ID" value="BAC11284.1"/>
    <property type="molecule type" value="mRNA"/>
</dbReference>
<dbReference type="EMBL" id="AL132826">
    <property type="status" value="NOT_ANNOTATED_CDS"/>
    <property type="molecule type" value="Genomic_DNA"/>
</dbReference>
<dbReference type="EMBL" id="CH471133">
    <property type="protein sequence ID" value="EAX10300.1"/>
    <property type="molecule type" value="Genomic_DNA"/>
</dbReference>
<dbReference type="EMBL" id="CH471133">
    <property type="protein sequence ID" value="EAX10301.1"/>
    <property type="molecule type" value="Genomic_DNA"/>
</dbReference>
<dbReference type="EMBL" id="BC020870">
    <property type="protein sequence ID" value="AAH20870.1"/>
    <property type="molecule type" value="mRNA"/>
</dbReference>
<dbReference type="CCDS" id="CCDS13121.1"/>
<dbReference type="RefSeq" id="NP_037413.1">
    <property type="nucleotide sequence ID" value="NM_013281.4"/>
</dbReference>
<dbReference type="RefSeq" id="NP_938205.1">
    <property type="nucleotide sequence ID" value="NM_198391.3"/>
</dbReference>
<dbReference type="RefSeq" id="XP_005260739.1">
    <property type="nucleotide sequence ID" value="XM_005260682.5"/>
</dbReference>
<dbReference type="RefSeq" id="XP_011527506.1">
    <property type="nucleotide sequence ID" value="XM_011529204.3"/>
</dbReference>
<dbReference type="RefSeq" id="XP_011527507.1">
    <property type="nucleotide sequence ID" value="XM_011529205.3"/>
</dbReference>
<dbReference type="PDB" id="5CMN">
    <property type="method" value="X-ray"/>
    <property type="resolution" value="3.61 A"/>
    <property type="chains" value="A/B/C/D=29-357"/>
</dbReference>
<dbReference type="PDB" id="5CMP">
    <property type="method" value="X-ray"/>
    <property type="resolution" value="2.60 A"/>
    <property type="chains" value="A/B/C/D=29-357"/>
</dbReference>
<dbReference type="PDB" id="6JBU">
    <property type="method" value="X-ray"/>
    <property type="resolution" value="1.85 A"/>
    <property type="chains" value="B=29-358"/>
</dbReference>
<dbReference type="PDBsum" id="5CMN"/>
<dbReference type="PDBsum" id="5CMP"/>
<dbReference type="PDBsum" id="6JBU"/>
<dbReference type="SMR" id="Q9NZU0"/>
<dbReference type="BioGRID" id="117267">
    <property type="interactions" value="26"/>
</dbReference>
<dbReference type="CORUM" id="Q9NZU0"/>
<dbReference type="DIP" id="DIP-50407N"/>
<dbReference type="FunCoup" id="Q9NZU0">
    <property type="interactions" value="431"/>
</dbReference>
<dbReference type="IntAct" id="Q9NZU0">
    <property type="interactions" value="10"/>
</dbReference>
<dbReference type="STRING" id="9606.ENSP00000339912"/>
<dbReference type="TCDB" id="8.A.43.1.27">
    <property type="family name" value="the neat-domain containing methaemoglobin heme sequestration (n-mhs) family"/>
</dbReference>
<dbReference type="GlyConnect" id="1454">
    <property type="glycosylation" value="2 N-Linked glycans (1 site)"/>
</dbReference>
<dbReference type="GlyCosmos" id="Q9NZU0">
    <property type="glycosylation" value="3 sites, 2 glycans"/>
</dbReference>
<dbReference type="GlyGen" id="Q9NZU0">
    <property type="glycosylation" value="8 sites, 7 N-linked glycans (2 sites), 1 O-linked glycan (4 sites)"/>
</dbReference>
<dbReference type="iPTMnet" id="Q9NZU0"/>
<dbReference type="PhosphoSitePlus" id="Q9NZU0"/>
<dbReference type="BioMuta" id="FLRT3"/>
<dbReference type="DMDM" id="20138400"/>
<dbReference type="jPOST" id="Q9NZU0"/>
<dbReference type="MassIVE" id="Q9NZU0"/>
<dbReference type="PaxDb" id="9606-ENSP00000367292"/>
<dbReference type="PeptideAtlas" id="Q9NZU0"/>
<dbReference type="ProteomicsDB" id="83509"/>
<dbReference type="Antibodypedia" id="24361">
    <property type="antibodies" value="113 antibodies from 23 providers"/>
</dbReference>
<dbReference type="DNASU" id="23767"/>
<dbReference type="Ensembl" id="ENST00000341420.5">
    <property type="protein sequence ID" value="ENSP00000339912.4"/>
    <property type="gene ID" value="ENSG00000125848.10"/>
</dbReference>
<dbReference type="Ensembl" id="ENST00000378053.3">
    <property type="protein sequence ID" value="ENSP00000367292.3"/>
    <property type="gene ID" value="ENSG00000125848.10"/>
</dbReference>
<dbReference type="GeneID" id="23767"/>
<dbReference type="KEGG" id="hsa:23767"/>
<dbReference type="MANE-Select" id="ENST00000341420.5">
    <property type="protein sequence ID" value="ENSP00000339912.4"/>
    <property type="RefSeq nucleotide sequence ID" value="NM_198391.3"/>
    <property type="RefSeq protein sequence ID" value="NP_938205.1"/>
</dbReference>
<dbReference type="UCSC" id="uc002wov.3">
    <property type="organism name" value="human"/>
</dbReference>
<dbReference type="AGR" id="HGNC:3762"/>
<dbReference type="CTD" id="23767"/>
<dbReference type="DisGeNET" id="23767"/>
<dbReference type="GeneCards" id="FLRT3"/>
<dbReference type="GeneReviews" id="FLRT3"/>
<dbReference type="HGNC" id="HGNC:3762">
    <property type="gene designation" value="FLRT3"/>
</dbReference>
<dbReference type="HPA" id="ENSG00000125848">
    <property type="expression patterns" value="Tissue enhanced (kidney)"/>
</dbReference>
<dbReference type="MalaCards" id="FLRT3"/>
<dbReference type="MIM" id="604808">
    <property type="type" value="gene"/>
</dbReference>
<dbReference type="MIM" id="615271">
    <property type="type" value="phenotype"/>
</dbReference>
<dbReference type="neXtProt" id="NX_Q9NZU0"/>
<dbReference type="OpenTargets" id="ENSG00000125848"/>
<dbReference type="Orphanet" id="478">
    <property type="disease" value="Kallmann syndrome"/>
</dbReference>
<dbReference type="PharmGKB" id="PA28179"/>
<dbReference type="VEuPathDB" id="HostDB:ENSG00000125848"/>
<dbReference type="eggNOG" id="ENOG502QQBZ">
    <property type="taxonomic scope" value="Eukaryota"/>
</dbReference>
<dbReference type="GeneTree" id="ENSGT00940000159704"/>
<dbReference type="HOGENOM" id="CLU_027624_0_0_1"/>
<dbReference type="InParanoid" id="Q9NZU0"/>
<dbReference type="OMA" id="DAIHISW"/>
<dbReference type="OrthoDB" id="676979at2759"/>
<dbReference type="PAN-GO" id="Q9NZU0">
    <property type="GO annotations" value="1 GO annotation based on evolutionary models"/>
</dbReference>
<dbReference type="PhylomeDB" id="Q9NZU0"/>
<dbReference type="TreeFam" id="TF331598"/>
<dbReference type="PathwayCommons" id="Q9NZU0"/>
<dbReference type="Reactome" id="R-HSA-376176">
    <property type="pathway name" value="Signaling by ROBO receptors"/>
</dbReference>
<dbReference type="Reactome" id="R-HSA-5654687">
    <property type="pathway name" value="Downstream signaling of activated FGFR1"/>
</dbReference>
<dbReference type="SignaLink" id="Q9NZU0"/>
<dbReference type="BioGRID-ORCS" id="23767">
    <property type="hits" value="5 hits in 1137 CRISPR screens"/>
</dbReference>
<dbReference type="EvolutionaryTrace" id="Q9NZU0"/>
<dbReference type="GeneWiki" id="FLRT3"/>
<dbReference type="GenomeRNAi" id="23767"/>
<dbReference type="Pharos" id="Q9NZU0">
    <property type="development level" value="Tbio"/>
</dbReference>
<dbReference type="PRO" id="PR:Q9NZU0"/>
<dbReference type="Proteomes" id="UP000005640">
    <property type="component" value="Chromosome 20"/>
</dbReference>
<dbReference type="RNAct" id="Q9NZU0">
    <property type="molecule type" value="protein"/>
</dbReference>
<dbReference type="Bgee" id="ENSG00000125848">
    <property type="expression patterns" value="Expressed in endothelial cell and 181 other cell types or tissues"/>
</dbReference>
<dbReference type="GO" id="GO:0043679">
    <property type="term" value="C:axon terminus"/>
    <property type="evidence" value="ECO:0000250"/>
    <property type="project" value="UniProtKB"/>
</dbReference>
<dbReference type="GO" id="GO:0044295">
    <property type="term" value="C:axonal growth cone"/>
    <property type="evidence" value="ECO:0000250"/>
    <property type="project" value="UniProtKB"/>
</dbReference>
<dbReference type="GO" id="GO:0030054">
    <property type="term" value="C:cell junction"/>
    <property type="evidence" value="ECO:0000314"/>
    <property type="project" value="HPA"/>
</dbReference>
<dbReference type="GO" id="GO:0005911">
    <property type="term" value="C:cell-cell junction"/>
    <property type="evidence" value="ECO:0007669"/>
    <property type="project" value="Ensembl"/>
</dbReference>
<dbReference type="GO" id="GO:0005829">
    <property type="term" value="C:cytosol"/>
    <property type="evidence" value="ECO:0000314"/>
    <property type="project" value="HPA"/>
</dbReference>
<dbReference type="GO" id="GO:0005789">
    <property type="term" value="C:endoplasmic reticulum membrane"/>
    <property type="evidence" value="ECO:0007669"/>
    <property type="project" value="UniProtKB-SubCell"/>
</dbReference>
<dbReference type="GO" id="GO:0031012">
    <property type="term" value="C:extracellular matrix"/>
    <property type="evidence" value="ECO:0000303"/>
    <property type="project" value="UniProtKB"/>
</dbReference>
<dbReference type="GO" id="GO:0005615">
    <property type="term" value="C:extracellular space"/>
    <property type="evidence" value="ECO:0000318"/>
    <property type="project" value="GO_Central"/>
</dbReference>
<dbReference type="GO" id="GO:0005925">
    <property type="term" value="C:focal adhesion"/>
    <property type="evidence" value="ECO:0007669"/>
    <property type="project" value="UniProtKB-SubCell"/>
</dbReference>
<dbReference type="GO" id="GO:0098978">
    <property type="term" value="C:glutamatergic synapse"/>
    <property type="evidence" value="ECO:0007669"/>
    <property type="project" value="Ensembl"/>
</dbReference>
<dbReference type="GO" id="GO:0032584">
    <property type="term" value="C:growth cone membrane"/>
    <property type="evidence" value="ECO:0007669"/>
    <property type="project" value="UniProtKB-SubCell"/>
</dbReference>
<dbReference type="GO" id="GO:0005886">
    <property type="term" value="C:plasma membrane"/>
    <property type="evidence" value="ECO:0000314"/>
    <property type="project" value="UniProtKB"/>
</dbReference>
<dbReference type="GO" id="GO:0045211">
    <property type="term" value="C:postsynaptic membrane"/>
    <property type="evidence" value="ECO:0007669"/>
    <property type="project" value="Ensembl"/>
</dbReference>
<dbReference type="GO" id="GO:0097060">
    <property type="term" value="C:synaptic membrane"/>
    <property type="evidence" value="ECO:0000250"/>
    <property type="project" value="UniProtKB"/>
</dbReference>
<dbReference type="GO" id="GO:0045499">
    <property type="term" value="F:chemorepellent activity"/>
    <property type="evidence" value="ECO:0007669"/>
    <property type="project" value="Ensembl"/>
</dbReference>
<dbReference type="GO" id="GO:0005104">
    <property type="term" value="F:fibroblast growth factor receptor binding"/>
    <property type="evidence" value="ECO:0007669"/>
    <property type="project" value="Ensembl"/>
</dbReference>
<dbReference type="GO" id="GO:0042803">
    <property type="term" value="F:protein homodimerization activity"/>
    <property type="evidence" value="ECO:0000314"/>
    <property type="project" value="UniProtKB"/>
</dbReference>
<dbReference type="GO" id="GO:0030674">
    <property type="term" value="F:protein-macromolecule adaptor activity"/>
    <property type="evidence" value="ECO:0000303"/>
    <property type="project" value="UniProtKB"/>
</dbReference>
<dbReference type="GO" id="GO:0007411">
    <property type="term" value="P:axon guidance"/>
    <property type="evidence" value="ECO:0007669"/>
    <property type="project" value="Ensembl"/>
</dbReference>
<dbReference type="GO" id="GO:0098742">
    <property type="term" value="P:cell-cell adhesion via plasma-membrane adhesion molecules"/>
    <property type="evidence" value="ECO:0000314"/>
    <property type="project" value="UniProtKB"/>
</dbReference>
<dbReference type="GO" id="GO:0048598">
    <property type="term" value="P:embryonic morphogenesis"/>
    <property type="evidence" value="ECO:0000250"/>
    <property type="project" value="UniProtKB"/>
</dbReference>
<dbReference type="GO" id="GO:0008543">
    <property type="term" value="P:fibroblast growth factor receptor signaling pathway"/>
    <property type="evidence" value="ECO:0000250"/>
    <property type="project" value="UniProtKB"/>
</dbReference>
<dbReference type="GO" id="GO:0060322">
    <property type="term" value="P:head development"/>
    <property type="evidence" value="ECO:0000250"/>
    <property type="project" value="UniProtKB"/>
</dbReference>
<dbReference type="GO" id="GO:0007507">
    <property type="term" value="P:heart development"/>
    <property type="evidence" value="ECO:0000250"/>
    <property type="project" value="UniProtKB"/>
</dbReference>
<dbReference type="GO" id="GO:0031175">
    <property type="term" value="P:neuron projection development"/>
    <property type="evidence" value="ECO:0000250"/>
    <property type="project" value="UniProtKB"/>
</dbReference>
<dbReference type="GO" id="GO:1990138">
    <property type="term" value="P:neuron projection extension"/>
    <property type="evidence" value="ECO:0000315"/>
    <property type="project" value="UniProtKB"/>
</dbReference>
<dbReference type="GO" id="GO:0051965">
    <property type="term" value="P:positive regulation of synapse assembly"/>
    <property type="evidence" value="ECO:0007669"/>
    <property type="project" value="Ensembl"/>
</dbReference>
<dbReference type="GO" id="GO:0003345">
    <property type="term" value="P:proepicardium cell migration involved in pericardium morphogenesis"/>
    <property type="evidence" value="ECO:0000250"/>
    <property type="project" value="UniProtKB"/>
</dbReference>
<dbReference type="GO" id="GO:0048678">
    <property type="term" value="P:response to axon injury"/>
    <property type="evidence" value="ECO:0000250"/>
    <property type="project" value="UniProtKB"/>
</dbReference>
<dbReference type="GO" id="GO:0007416">
    <property type="term" value="P:synapse assembly"/>
    <property type="evidence" value="ECO:0000250"/>
    <property type="project" value="UniProtKB"/>
</dbReference>
<dbReference type="GO" id="GO:0099560">
    <property type="term" value="P:synaptic membrane adhesion"/>
    <property type="evidence" value="ECO:0007669"/>
    <property type="project" value="Ensembl"/>
</dbReference>
<dbReference type="FunFam" id="3.80.10.10:FF:000043">
    <property type="entry name" value="Leucine-rich repeat transmembrane protein FLRT3"/>
    <property type="match status" value="1"/>
</dbReference>
<dbReference type="Gene3D" id="2.60.40.10">
    <property type="entry name" value="Immunoglobulins"/>
    <property type="match status" value="1"/>
</dbReference>
<dbReference type="Gene3D" id="3.80.10.10">
    <property type="entry name" value="Ribonuclease Inhibitor"/>
    <property type="match status" value="1"/>
</dbReference>
<dbReference type="InterPro" id="IPR000483">
    <property type="entry name" value="Cys-rich_flank_reg_C"/>
</dbReference>
<dbReference type="InterPro" id="IPR003961">
    <property type="entry name" value="FN3_dom"/>
</dbReference>
<dbReference type="InterPro" id="IPR036116">
    <property type="entry name" value="FN3_sf"/>
</dbReference>
<dbReference type="InterPro" id="IPR013783">
    <property type="entry name" value="Ig-like_fold"/>
</dbReference>
<dbReference type="InterPro" id="IPR001611">
    <property type="entry name" value="Leu-rich_rpt"/>
</dbReference>
<dbReference type="InterPro" id="IPR003591">
    <property type="entry name" value="Leu-rich_rpt_typical-subtyp"/>
</dbReference>
<dbReference type="InterPro" id="IPR032675">
    <property type="entry name" value="LRR_dom_sf"/>
</dbReference>
<dbReference type="InterPro" id="IPR000372">
    <property type="entry name" value="LRRNT"/>
</dbReference>
<dbReference type="InterPro" id="IPR050333">
    <property type="entry name" value="SLRP"/>
</dbReference>
<dbReference type="PANTHER" id="PTHR45712">
    <property type="entry name" value="AGAP008170-PA"/>
    <property type="match status" value="1"/>
</dbReference>
<dbReference type="PANTHER" id="PTHR45712:SF12">
    <property type="entry name" value="LEUCINE-RICH REPEAT TRANSMEMBRANE PROTEIN FLRT3"/>
    <property type="match status" value="1"/>
</dbReference>
<dbReference type="Pfam" id="PF13855">
    <property type="entry name" value="LRR_8"/>
    <property type="match status" value="2"/>
</dbReference>
<dbReference type="SMART" id="SM00369">
    <property type="entry name" value="LRR_TYP"/>
    <property type="match status" value="7"/>
</dbReference>
<dbReference type="SMART" id="SM00082">
    <property type="entry name" value="LRRCT"/>
    <property type="match status" value="1"/>
</dbReference>
<dbReference type="SMART" id="SM00013">
    <property type="entry name" value="LRRNT"/>
    <property type="match status" value="1"/>
</dbReference>
<dbReference type="SUPFAM" id="SSF49265">
    <property type="entry name" value="Fibronectin type III"/>
    <property type="match status" value="1"/>
</dbReference>
<dbReference type="SUPFAM" id="SSF52058">
    <property type="entry name" value="L domain-like"/>
    <property type="match status" value="2"/>
</dbReference>
<dbReference type="PROSITE" id="PS50853">
    <property type="entry name" value="FN3"/>
    <property type="match status" value="1"/>
</dbReference>
<dbReference type="PROSITE" id="PS51450">
    <property type="entry name" value="LRR"/>
    <property type="match status" value="8"/>
</dbReference>
<name>FLRT3_HUMAN</name>
<sequence>MISAAWSIFLIGTKIGLFLQVAPLSVMAKSCPSVCRCDAGFIYCNDRFLTSIPTGIPEDATTLYLQNNQINNAGIPSDLKNLLKVERIYLYHNSLDEFPTNLPKYVKELHLQENNIRTITYDSLSKIPYLEELHLDDNSVSAVSIEEGAFRDSNYLRLLFLSRNHLSTIPWGLPRTIEELRLDDNRISTISSPSLQGLTSLKRLVLDGNLLNNHGLGDKVFFNLVNLTELSLVRNSLTAAPVNLPGTNLRKLYLQDNHINRVPPNAFSYLRQLYRLDMSNNNLSNLPQGIFDDLDNITQLILRNNPWYCGCKMKWVRDWLQSLPVKVNVRGLMCQAPEKVRGMAIKDLNAELFDCKDSGIVSTIQITTAIPNTVYPAQGQWPAPVTKQPDIKNPKLTKDHQTTGSPSRKTITITVKSVTSDTIHISWKLALPMTALRLSWLKLGHSPAFGSITETIVTGERSEYLVTALEPDSPYKVCMVPMETSNLYLFDETPVCIETETAPLRMYNPTTTLNREQEKEPYKNPNLPLAAIIGGAVALVTIALLALVCWYVHRNGSLFSRNCAYSKGRRRKDDYAEAGTKKDNSILEIRETSFQMLPISNEPISKEEFVIHTIFPPNGMNLYKNNHSESSSNRSYRDSGIPDSDHSHS</sequence>
<proteinExistence type="evidence at protein level"/>
<gene>
    <name type="primary">FLRT3</name>
    <name type="synonym">KIAA1469</name>
    <name type="ORF">UNQ856/PRO1865</name>
</gene>
<feature type="signal peptide" evidence="3">
    <location>
        <begin position="1"/>
        <end position="28"/>
    </location>
</feature>
<feature type="chain" id="PRO_0000021280" description="Leucine-rich repeat transmembrane protein FLRT3">
    <location>
        <begin position="29"/>
        <end position="649"/>
    </location>
</feature>
<feature type="topological domain" description="Extracellular" evidence="3">
    <location>
        <begin position="29"/>
        <end position="528"/>
    </location>
</feature>
<feature type="transmembrane region" description="Helical" evidence="3">
    <location>
        <begin position="529"/>
        <end position="549"/>
    </location>
</feature>
<feature type="topological domain" description="Cytoplasmic" evidence="3">
    <location>
        <begin position="550"/>
        <end position="649"/>
    </location>
</feature>
<feature type="domain" description="LRRNT" evidence="3">
    <location>
        <begin position="29"/>
        <end position="58"/>
    </location>
</feature>
<feature type="repeat" description="LRR 1" evidence="3">
    <location>
        <begin position="59"/>
        <end position="80"/>
    </location>
</feature>
<feature type="repeat" description="LRR 2" evidence="3">
    <location>
        <begin position="84"/>
        <end position="104"/>
    </location>
</feature>
<feature type="repeat" description="LRR 3" evidence="3">
    <location>
        <begin position="105"/>
        <end position="126"/>
    </location>
</feature>
<feature type="repeat" description="LRR 4" evidence="3">
    <location>
        <begin position="129"/>
        <end position="150"/>
    </location>
</feature>
<feature type="repeat" description="LRR 5" evidence="3">
    <location>
        <begin position="155"/>
        <end position="175"/>
    </location>
</feature>
<feature type="repeat" description="LRR 6" evidence="3">
    <location>
        <begin position="176"/>
        <end position="197"/>
    </location>
</feature>
<feature type="repeat" description="LRR 7" evidence="3">
    <location>
        <begin position="200"/>
        <end position="220"/>
    </location>
</feature>
<feature type="repeat" description="LRR 8" evidence="3">
    <location>
        <begin position="226"/>
        <end position="247"/>
    </location>
</feature>
<feature type="repeat" description="LRR 9" evidence="3">
    <location>
        <begin position="248"/>
        <end position="269"/>
    </location>
</feature>
<feature type="repeat" description="LRR 10" evidence="3">
    <location>
        <begin position="272"/>
        <end position="293"/>
    </location>
</feature>
<feature type="domain" description="LRRCT" evidence="3">
    <location>
        <begin position="305"/>
        <end position="357"/>
    </location>
</feature>
<feature type="domain" description="Fibronectin type-III" evidence="4">
    <location>
        <begin position="409"/>
        <end position="504"/>
    </location>
</feature>
<feature type="region of interest" description="Interaction with ADGRL3" evidence="12">
    <location>
        <begin position="38"/>
        <end position="67"/>
    </location>
</feature>
<feature type="region of interest" description="Disordered" evidence="5">
    <location>
        <begin position="387"/>
        <end position="407"/>
    </location>
</feature>
<feature type="region of interest" description="Disordered" evidence="5">
    <location>
        <begin position="622"/>
        <end position="649"/>
    </location>
</feature>
<feature type="compositionally biased region" description="Basic and acidic residues" evidence="5">
    <location>
        <begin position="389"/>
        <end position="401"/>
    </location>
</feature>
<feature type="glycosylation site" description="N-linked (GlcNAc...) asparagine" evidence="3 12">
    <location>
        <position position="226"/>
    </location>
</feature>
<feature type="glycosylation site" description="N-linked (GlcNAc...) asparagine" evidence="3">
    <location>
        <position position="282"/>
    </location>
</feature>
<feature type="glycosylation site" description="N-linked (GlcNAc...) asparagine" evidence="3">
    <location>
        <position position="296"/>
    </location>
</feature>
<feature type="disulfide bond" evidence="12">
    <location>
        <begin position="31"/>
        <end position="37"/>
    </location>
</feature>
<feature type="disulfide bond" evidence="12">
    <location>
        <begin position="35"/>
        <end position="44"/>
    </location>
</feature>
<feature type="disulfide bond" evidence="12">
    <location>
        <begin position="309"/>
        <end position="334"/>
    </location>
</feature>
<feature type="sequence variant" id="VAR_069950" description="In HH21; the patient has a second mutation in the HH-associated gene FGFR1; dbSNP:rs398124653." evidence="11">
    <original>Q</original>
    <variation>K</variation>
    <location>
        <position position="69"/>
    </location>
</feature>
<feature type="sequence variant" id="VAR_069951" description="In HH21; patients have a second mutation in another HH-associated gene including FGFR1, HS6ST1 and FGF17; dbSNP:rs398124651." evidence="11">
    <original>E</original>
    <variation>G</variation>
    <location>
        <position position="97"/>
    </location>
</feature>
<feature type="sequence variant" id="VAR_069952" description="In HH21; patients have a second mutation in another HH-associated gene including FGFR1, HS6ST1 and FGF17; dbSNP:rs398124652." evidence="11">
    <original>S</original>
    <variation>I</variation>
    <location>
        <position position="144"/>
    </location>
</feature>
<feature type="sequence variant" id="VAR_069953" description="In HH21; dbSNP:rs398124654." evidence="11">
    <original>K</original>
    <variation>R</variation>
    <location>
        <position position="339"/>
    </location>
</feature>
<feature type="sequence variant" id="VAR_050997" description="In dbSNP:rs8120693.">
    <original>A</original>
    <variation>T</variation>
    <location>
        <position position="377"/>
    </location>
</feature>
<feature type="sequence variant" id="VAR_017152" description="In dbSNP:rs6079391." evidence="7 8 13">
    <original>H</original>
    <variation>Q</variation>
    <location>
        <position position="400"/>
    </location>
</feature>
<feature type="sequence variant" id="VAR_064714" description="Found in a renal cell carcinoma case; somatic mutation; dbSNP:rs1393315241." evidence="10">
    <original>I</original>
    <variation>V</variation>
    <location>
        <position position="452"/>
    </location>
</feature>
<feature type="sequence variant" id="VAR_050998" description="In dbSNP:rs35253731.">
    <original>E</original>
    <variation>D</variation>
    <location>
        <position position="460"/>
    </location>
</feature>
<feature type="mutagenesis site" description="Abolishes ADGRL3 binding; when associated with A-43; A-45 and A-47." evidence="12">
    <original>D</original>
    <variation>A</variation>
    <location>
        <position position="38"/>
    </location>
</feature>
<feature type="mutagenesis site" description="Abolishes ADGRL3 binding; when associated with A-64. Abolishes ADGRL3 binding; when associated with A-38; A-43 and A-47." evidence="12">
    <original>Y</original>
    <variation>A</variation>
    <location>
        <position position="43"/>
    </location>
</feature>
<feature type="mutagenesis site" description="Abolishes ADGRL3 binding; when associated with A-38; A-43 and A-47." evidence="12">
    <original>N</original>
    <variation>A</variation>
    <location>
        <position position="45"/>
    </location>
</feature>
<feature type="mutagenesis site" description="Abolishes ADGRL3 binding; when associated with A-38; A-43 and A-45." evidence="12">
    <original>R</original>
    <variation>A</variation>
    <location>
        <position position="47"/>
    </location>
</feature>
<feature type="mutagenesis site" description="Abolishes ADGRL3 binding; when associated with A-43." evidence="12">
    <original>Y</original>
    <variation>A</variation>
    <location>
        <position position="64"/>
    </location>
</feature>
<feature type="mutagenesis site" description="Abolishes ADGRL3 binding; when associated with A-91." evidence="12">
    <original>Y</original>
    <variation>A</variation>
    <location>
        <position position="89"/>
    </location>
</feature>
<feature type="mutagenesis site" description="Abolishes ADGRL3 binding; when associated with A-89." evidence="12">
    <original>Y</original>
    <variation>A</variation>
    <location>
        <position position="91"/>
    </location>
</feature>
<feature type="mutagenesis site" description="No effect on homodimerization; when associated with A-183." evidence="12">
    <original>R</original>
    <variation>A</variation>
    <location>
        <position position="181"/>
    </location>
</feature>
<feature type="mutagenesis site" description="Adds a glycosylation site that strongly reduces homodimerization; when associated with T-183." evidence="12">
    <original>R</original>
    <variation>N</variation>
    <location>
        <position position="181"/>
    </location>
</feature>
<feature type="mutagenesis site" description="No effect on homodimerization; when associated with A-181." evidence="12">
    <original>D</original>
    <variation>A</variation>
    <location>
        <position position="183"/>
    </location>
</feature>
<feature type="mutagenesis site" description="Adds a glycosylation site that strongly reduces homodimerization; when associated with T-183." evidence="12">
    <original>D</original>
    <variation>T</variation>
    <location>
        <position position="183"/>
    </location>
</feature>
<feature type="sequence conflict" description="In Ref. 3; BAB55282." evidence="14" ref="3">
    <original>L</original>
    <variation>P</variation>
    <location>
        <position position="198"/>
    </location>
</feature>
<feature type="sequence conflict" description="In Ref. 3; BAB55282." evidence="14" ref="3">
    <original>W</original>
    <variation>R</variation>
    <location>
        <position position="307"/>
    </location>
</feature>
<feature type="sequence conflict" description="In Ref. 3; BAB55023." evidence="14" ref="3">
    <original>K</original>
    <variation>Q</variation>
    <location>
        <position position="519"/>
    </location>
</feature>
<feature type="sequence conflict" description="In Ref. 3; BAB55282." evidence="14" ref="3">
    <original>D</original>
    <variation>G</variation>
    <location>
        <position position="638"/>
    </location>
</feature>
<feature type="strand" evidence="15">
    <location>
        <begin position="35"/>
        <end position="38"/>
    </location>
</feature>
<feature type="strand" evidence="15">
    <location>
        <begin position="41"/>
        <end position="43"/>
    </location>
</feature>
<feature type="strand" evidence="15">
    <location>
        <begin position="62"/>
        <end position="64"/>
    </location>
</feature>
<feature type="helix" evidence="15">
    <location>
        <begin position="72"/>
        <end position="74"/>
    </location>
</feature>
<feature type="helix" evidence="15">
    <location>
        <begin position="77"/>
        <end position="81"/>
    </location>
</feature>
<feature type="strand" evidence="15">
    <location>
        <begin position="87"/>
        <end position="89"/>
    </location>
</feature>
<feature type="strand" evidence="15">
    <location>
        <begin position="108"/>
        <end position="110"/>
    </location>
</feature>
<feature type="helix" evidence="15">
    <location>
        <begin position="121"/>
        <end position="125"/>
    </location>
</feature>
<feature type="strand" evidence="15">
    <location>
        <begin position="132"/>
        <end position="134"/>
    </location>
</feature>
<feature type="turn" evidence="15">
    <location>
        <begin position="142"/>
        <end position="144"/>
    </location>
</feature>
<feature type="turn" evidence="15">
    <location>
        <begin position="147"/>
        <end position="152"/>
    </location>
</feature>
<feature type="strand" evidence="15">
    <location>
        <begin position="158"/>
        <end position="160"/>
    </location>
</feature>
<feature type="strand" evidence="15">
    <location>
        <begin position="178"/>
        <end position="181"/>
    </location>
</feature>
<feature type="helix" evidence="15">
    <location>
        <begin position="192"/>
        <end position="195"/>
    </location>
</feature>
<feature type="strand" evidence="15">
    <location>
        <begin position="203"/>
        <end position="205"/>
    </location>
</feature>
<feature type="turn" evidence="15">
    <location>
        <begin position="213"/>
        <end position="215"/>
    </location>
</feature>
<feature type="turn" evidence="15">
    <location>
        <begin position="218"/>
        <end position="223"/>
    </location>
</feature>
<feature type="strand" evidence="15">
    <location>
        <begin position="229"/>
        <end position="231"/>
    </location>
</feature>
<feature type="strand" evidence="15">
    <location>
        <begin position="251"/>
        <end position="253"/>
    </location>
</feature>
<feature type="turn" evidence="15">
    <location>
        <begin position="264"/>
        <end position="269"/>
    </location>
</feature>
<feature type="strand" evidence="15">
    <location>
        <begin position="275"/>
        <end position="277"/>
    </location>
</feature>
<feature type="turn" evidence="15">
    <location>
        <begin position="288"/>
        <end position="293"/>
    </location>
</feature>
<feature type="strand" evidence="15">
    <location>
        <begin position="299"/>
        <end position="301"/>
    </location>
</feature>
<feature type="helix" evidence="15">
    <location>
        <begin position="311"/>
        <end position="313"/>
    </location>
</feature>
<feature type="helix" evidence="15">
    <location>
        <begin position="314"/>
        <end position="321"/>
    </location>
</feature>
<feature type="strand" evidence="15">
    <location>
        <begin position="328"/>
        <end position="330"/>
    </location>
</feature>
<feature type="strand" evidence="15">
    <location>
        <begin position="333"/>
        <end position="338"/>
    </location>
</feature>
<feature type="turn" evidence="15">
    <location>
        <begin position="339"/>
        <end position="342"/>
    </location>
</feature>
<feature type="helix" evidence="15">
    <location>
        <begin position="345"/>
        <end position="347"/>
    </location>
</feature>
<keyword id="KW-0002">3D-structure</keyword>
<keyword id="KW-0130">Cell adhesion</keyword>
<keyword id="KW-0965">Cell junction</keyword>
<keyword id="KW-1003">Cell membrane</keyword>
<keyword id="KW-0966">Cell projection</keyword>
<keyword id="KW-0217">Developmental protein</keyword>
<keyword id="KW-0225">Disease variant</keyword>
<keyword id="KW-1015">Disulfide bond</keyword>
<keyword id="KW-0256">Endoplasmic reticulum</keyword>
<keyword id="KW-0325">Glycoprotein</keyword>
<keyword id="KW-1016">Hypogonadotropic hypogonadism</keyword>
<keyword id="KW-0956">Kallmann syndrome</keyword>
<keyword id="KW-0433">Leucine-rich repeat</keyword>
<keyword id="KW-0472">Membrane</keyword>
<keyword id="KW-1267">Proteomics identification</keyword>
<keyword id="KW-1185">Reference proteome</keyword>
<keyword id="KW-0677">Repeat</keyword>
<keyword id="KW-0964">Secreted</keyword>
<keyword id="KW-0732">Signal</keyword>
<keyword id="KW-0770">Synapse</keyword>
<keyword id="KW-0812">Transmembrane</keyword>
<keyword id="KW-1133">Transmembrane helix</keyword>
<organism>
    <name type="scientific">Homo sapiens</name>
    <name type="common">Human</name>
    <dbReference type="NCBI Taxonomy" id="9606"/>
    <lineage>
        <taxon>Eukaryota</taxon>
        <taxon>Metazoa</taxon>
        <taxon>Chordata</taxon>
        <taxon>Craniata</taxon>
        <taxon>Vertebrata</taxon>
        <taxon>Euteleostomi</taxon>
        <taxon>Mammalia</taxon>
        <taxon>Eutheria</taxon>
        <taxon>Euarchontoglires</taxon>
        <taxon>Primates</taxon>
        <taxon>Haplorrhini</taxon>
        <taxon>Catarrhini</taxon>
        <taxon>Hominidae</taxon>
        <taxon>Homo</taxon>
    </lineage>
</organism>
<evidence type="ECO:0000250" key="1">
    <source>
        <dbReference type="UniProtKB" id="B1H234"/>
    </source>
</evidence>
<evidence type="ECO:0000250" key="2">
    <source>
        <dbReference type="UniProtKB" id="Q8BGT1"/>
    </source>
</evidence>
<evidence type="ECO:0000255" key="3"/>
<evidence type="ECO:0000255" key="4">
    <source>
        <dbReference type="PROSITE-ProRule" id="PRU00316"/>
    </source>
</evidence>
<evidence type="ECO:0000256" key="5">
    <source>
        <dbReference type="SAM" id="MobiDB-lite"/>
    </source>
</evidence>
<evidence type="ECO:0000269" key="6">
    <source>
    </source>
</evidence>
<evidence type="ECO:0000269" key="7">
    <source>
    </source>
</evidence>
<evidence type="ECO:0000269" key="8">
    <source>
    </source>
</evidence>
<evidence type="ECO:0000269" key="9">
    <source>
    </source>
</evidence>
<evidence type="ECO:0000269" key="10">
    <source>
    </source>
</evidence>
<evidence type="ECO:0000269" key="11">
    <source>
    </source>
</evidence>
<evidence type="ECO:0000269" key="12">
    <source>
    </source>
</evidence>
<evidence type="ECO:0000269" key="13">
    <source ref="7"/>
</evidence>
<evidence type="ECO:0000305" key="14"/>
<evidence type="ECO:0007829" key="15">
    <source>
        <dbReference type="PDB" id="6JBU"/>
    </source>
</evidence>